<feature type="chain" id="PRO_1000038794" description="Lipoprotein signal peptidase">
    <location>
        <begin position="1"/>
        <end position="166"/>
    </location>
</feature>
<feature type="transmembrane region" description="Helical" evidence="1">
    <location>
        <begin position="10"/>
        <end position="30"/>
    </location>
</feature>
<feature type="transmembrane region" description="Helical" evidence="1">
    <location>
        <begin position="46"/>
        <end position="66"/>
    </location>
</feature>
<feature type="transmembrane region" description="Helical" evidence="1">
    <location>
        <begin position="71"/>
        <end position="91"/>
    </location>
</feature>
<feature type="transmembrane region" description="Helical" evidence="1">
    <location>
        <begin position="100"/>
        <end position="120"/>
    </location>
</feature>
<feature type="transmembrane region" description="Helical" evidence="1">
    <location>
        <begin position="135"/>
        <end position="155"/>
    </location>
</feature>
<feature type="active site" evidence="1">
    <location>
        <position position="126"/>
    </location>
</feature>
<feature type="active site" evidence="1">
    <location>
        <position position="144"/>
    </location>
</feature>
<dbReference type="EC" id="3.4.23.36" evidence="1"/>
<dbReference type="EMBL" id="CP000086">
    <property type="protein sequence ID" value="ABC39549.1"/>
    <property type="molecule type" value="Genomic_DNA"/>
</dbReference>
<dbReference type="RefSeq" id="WP_009892600.1">
    <property type="nucleotide sequence ID" value="NZ_CP008785.1"/>
</dbReference>
<dbReference type="SMR" id="Q2T0H4"/>
<dbReference type="GeneID" id="45120528"/>
<dbReference type="KEGG" id="bte:BTH_I0769"/>
<dbReference type="HOGENOM" id="CLU_083252_4_0_4"/>
<dbReference type="UniPathway" id="UPA00665"/>
<dbReference type="Proteomes" id="UP000001930">
    <property type="component" value="Chromosome I"/>
</dbReference>
<dbReference type="GO" id="GO:0005886">
    <property type="term" value="C:plasma membrane"/>
    <property type="evidence" value="ECO:0007669"/>
    <property type="project" value="UniProtKB-SubCell"/>
</dbReference>
<dbReference type="GO" id="GO:0004190">
    <property type="term" value="F:aspartic-type endopeptidase activity"/>
    <property type="evidence" value="ECO:0007669"/>
    <property type="project" value="UniProtKB-UniRule"/>
</dbReference>
<dbReference type="GO" id="GO:0006508">
    <property type="term" value="P:proteolysis"/>
    <property type="evidence" value="ECO:0007669"/>
    <property type="project" value="UniProtKB-KW"/>
</dbReference>
<dbReference type="HAMAP" id="MF_00161">
    <property type="entry name" value="LspA"/>
    <property type="match status" value="1"/>
</dbReference>
<dbReference type="InterPro" id="IPR001872">
    <property type="entry name" value="Peptidase_A8"/>
</dbReference>
<dbReference type="NCBIfam" id="TIGR00077">
    <property type="entry name" value="lspA"/>
    <property type="match status" value="1"/>
</dbReference>
<dbReference type="PANTHER" id="PTHR33695">
    <property type="entry name" value="LIPOPROTEIN SIGNAL PEPTIDASE"/>
    <property type="match status" value="1"/>
</dbReference>
<dbReference type="PANTHER" id="PTHR33695:SF1">
    <property type="entry name" value="LIPOPROTEIN SIGNAL PEPTIDASE"/>
    <property type="match status" value="1"/>
</dbReference>
<dbReference type="Pfam" id="PF01252">
    <property type="entry name" value="Peptidase_A8"/>
    <property type="match status" value="1"/>
</dbReference>
<dbReference type="PRINTS" id="PR00781">
    <property type="entry name" value="LIPOSIGPTASE"/>
</dbReference>
<dbReference type="PROSITE" id="PS00855">
    <property type="entry name" value="SPASE_II"/>
    <property type="match status" value="1"/>
</dbReference>
<sequence>MAKTLSKSSGGALAPWLGISLIVILFDQLTKIAVLKTFAYGAMHQLTPFFNLTLIYNRGAAFGFLATAGGWQRWAFTALGIGATLVICYLLKRHGHQRLFSLSLALILGGALGNVIDRLIYGHVIDFLDFHVGAWHWPAFNLADSAITVGAVLLIYDELRRVRGAR</sequence>
<evidence type="ECO:0000255" key="1">
    <source>
        <dbReference type="HAMAP-Rule" id="MF_00161"/>
    </source>
</evidence>
<organism>
    <name type="scientific">Burkholderia thailandensis (strain ATCC 700388 / DSM 13276 / CCUG 48851 / CIP 106301 / E264)</name>
    <dbReference type="NCBI Taxonomy" id="271848"/>
    <lineage>
        <taxon>Bacteria</taxon>
        <taxon>Pseudomonadati</taxon>
        <taxon>Pseudomonadota</taxon>
        <taxon>Betaproteobacteria</taxon>
        <taxon>Burkholderiales</taxon>
        <taxon>Burkholderiaceae</taxon>
        <taxon>Burkholderia</taxon>
        <taxon>pseudomallei group</taxon>
    </lineage>
</organism>
<gene>
    <name evidence="1" type="primary">lspA</name>
    <name type="ordered locus">BTH_I0769</name>
</gene>
<proteinExistence type="inferred from homology"/>
<accession>Q2T0H4</accession>
<protein>
    <recommendedName>
        <fullName evidence="1">Lipoprotein signal peptidase</fullName>
        <ecNumber evidence="1">3.4.23.36</ecNumber>
    </recommendedName>
    <alternativeName>
        <fullName evidence="1">Prolipoprotein signal peptidase</fullName>
    </alternativeName>
    <alternativeName>
        <fullName evidence="1">Signal peptidase II</fullName>
        <shortName evidence="1">SPase II</shortName>
    </alternativeName>
</protein>
<name>LSPA_BURTA</name>
<reference key="1">
    <citation type="journal article" date="2005" name="BMC Genomics">
        <title>Bacterial genome adaptation to niches: divergence of the potential virulence genes in three Burkholderia species of different survival strategies.</title>
        <authorList>
            <person name="Kim H.S."/>
            <person name="Schell M.A."/>
            <person name="Yu Y."/>
            <person name="Ulrich R.L."/>
            <person name="Sarria S.H."/>
            <person name="Nierman W.C."/>
            <person name="DeShazer D."/>
        </authorList>
    </citation>
    <scope>NUCLEOTIDE SEQUENCE [LARGE SCALE GENOMIC DNA]</scope>
    <source>
        <strain>ATCC 700388 / DSM 13276 / CCUG 48851 / CIP 106301 / E264</strain>
    </source>
</reference>
<keyword id="KW-0064">Aspartyl protease</keyword>
<keyword id="KW-0997">Cell inner membrane</keyword>
<keyword id="KW-1003">Cell membrane</keyword>
<keyword id="KW-0378">Hydrolase</keyword>
<keyword id="KW-0472">Membrane</keyword>
<keyword id="KW-0645">Protease</keyword>
<keyword id="KW-0812">Transmembrane</keyword>
<keyword id="KW-1133">Transmembrane helix</keyword>
<comment type="function">
    <text evidence="1">This protein specifically catalyzes the removal of signal peptides from prolipoproteins.</text>
</comment>
<comment type="catalytic activity">
    <reaction evidence="1">
        <text>Release of signal peptides from bacterial membrane prolipoproteins. Hydrolyzes -Xaa-Yaa-Zaa-|-(S,diacylglyceryl)Cys-, in which Xaa is hydrophobic (preferably Leu), and Yaa (Ala or Ser) and Zaa (Gly or Ala) have small, neutral side chains.</text>
        <dbReference type="EC" id="3.4.23.36"/>
    </reaction>
</comment>
<comment type="pathway">
    <text evidence="1">Protein modification; lipoprotein biosynthesis (signal peptide cleavage).</text>
</comment>
<comment type="subcellular location">
    <subcellularLocation>
        <location evidence="1">Cell inner membrane</location>
        <topology evidence="1">Multi-pass membrane protein</topology>
    </subcellularLocation>
</comment>
<comment type="similarity">
    <text evidence="1">Belongs to the peptidase A8 family.</text>
</comment>